<dbReference type="EMBL" id="AAFI02000035">
    <property type="protein sequence ID" value="EAL67422.1"/>
    <property type="status" value="ALT_SEQ"/>
    <property type="molecule type" value="Genomic_DNA"/>
</dbReference>
<dbReference type="RefSeq" id="XP_641367.1">
    <property type="nucleotide sequence ID" value="XM_636275.1"/>
</dbReference>
<dbReference type="PaxDb" id="44689-DDB0218232"/>
<dbReference type="EnsemblProtists" id="EAL67422">
    <property type="protein sequence ID" value="EAL67422"/>
    <property type="gene ID" value="DDB_G0280391"/>
</dbReference>
<dbReference type="GeneID" id="8622501"/>
<dbReference type="KEGG" id="ddi:DDB_G0280391"/>
<dbReference type="dictyBase" id="DDB_G0280391"/>
<dbReference type="VEuPathDB" id="AmoebaDB:DDB_G0280391"/>
<dbReference type="InParanoid" id="Q54VI8"/>
<dbReference type="PRO" id="PR:Q54VI8"/>
<dbReference type="Proteomes" id="UP000002195">
    <property type="component" value="Chromosome 3"/>
</dbReference>
<dbReference type="GO" id="GO:0016020">
    <property type="term" value="C:membrane"/>
    <property type="evidence" value="ECO:0007669"/>
    <property type="project" value="UniProtKB-SubCell"/>
</dbReference>
<comment type="subcellular location">
    <subcellularLocation>
        <location evidence="3">Membrane</location>
        <topology evidence="3">Single-pass membrane protein</topology>
    </subcellularLocation>
</comment>
<comment type="sequence caution" evidence="3">
    <conflict type="erroneous gene model prediction">
        <sequence resource="EMBL-CDS" id="EAL67422"/>
    </conflict>
</comment>
<organism>
    <name type="scientific">Dictyostelium discoideum</name>
    <name type="common">Social amoeba</name>
    <dbReference type="NCBI Taxonomy" id="44689"/>
    <lineage>
        <taxon>Eukaryota</taxon>
        <taxon>Amoebozoa</taxon>
        <taxon>Evosea</taxon>
        <taxon>Eumycetozoa</taxon>
        <taxon>Dictyostelia</taxon>
        <taxon>Dictyosteliales</taxon>
        <taxon>Dictyosteliaceae</taxon>
        <taxon>Dictyostelium</taxon>
    </lineage>
</organism>
<gene>
    <name type="ORF">DDB_G0280391</name>
</gene>
<protein>
    <recommendedName>
        <fullName>Putative uncharacterized protein DDB_G0280391</fullName>
    </recommendedName>
</protein>
<reference key="1">
    <citation type="journal article" date="2005" name="Nature">
        <title>The genome of the social amoeba Dictyostelium discoideum.</title>
        <authorList>
            <person name="Eichinger L."/>
            <person name="Pachebat J.A."/>
            <person name="Gloeckner G."/>
            <person name="Rajandream M.A."/>
            <person name="Sucgang R."/>
            <person name="Berriman M."/>
            <person name="Song J."/>
            <person name="Olsen R."/>
            <person name="Szafranski K."/>
            <person name="Xu Q."/>
            <person name="Tunggal B."/>
            <person name="Kummerfeld S."/>
            <person name="Madera M."/>
            <person name="Konfortov B.A."/>
            <person name="Rivero F."/>
            <person name="Bankier A.T."/>
            <person name="Lehmann R."/>
            <person name="Hamlin N."/>
            <person name="Davies R."/>
            <person name="Gaudet P."/>
            <person name="Fey P."/>
            <person name="Pilcher K."/>
            <person name="Chen G."/>
            <person name="Saunders D."/>
            <person name="Sodergren E.J."/>
            <person name="Davis P."/>
            <person name="Kerhornou A."/>
            <person name="Nie X."/>
            <person name="Hall N."/>
            <person name="Anjard C."/>
            <person name="Hemphill L."/>
            <person name="Bason N."/>
            <person name="Farbrother P."/>
            <person name="Desany B."/>
            <person name="Just E."/>
            <person name="Morio T."/>
            <person name="Rost R."/>
            <person name="Churcher C.M."/>
            <person name="Cooper J."/>
            <person name="Haydock S."/>
            <person name="van Driessche N."/>
            <person name="Cronin A."/>
            <person name="Goodhead I."/>
            <person name="Muzny D.M."/>
            <person name="Mourier T."/>
            <person name="Pain A."/>
            <person name="Lu M."/>
            <person name="Harper D."/>
            <person name="Lindsay R."/>
            <person name="Hauser H."/>
            <person name="James K.D."/>
            <person name="Quiles M."/>
            <person name="Madan Babu M."/>
            <person name="Saito T."/>
            <person name="Buchrieser C."/>
            <person name="Wardroper A."/>
            <person name="Felder M."/>
            <person name="Thangavelu M."/>
            <person name="Johnson D."/>
            <person name="Knights A."/>
            <person name="Loulseged H."/>
            <person name="Mungall K.L."/>
            <person name="Oliver K."/>
            <person name="Price C."/>
            <person name="Quail M.A."/>
            <person name="Urushihara H."/>
            <person name="Hernandez J."/>
            <person name="Rabbinowitsch E."/>
            <person name="Steffen D."/>
            <person name="Sanders M."/>
            <person name="Ma J."/>
            <person name="Kohara Y."/>
            <person name="Sharp S."/>
            <person name="Simmonds M.N."/>
            <person name="Spiegler S."/>
            <person name="Tivey A."/>
            <person name="Sugano S."/>
            <person name="White B."/>
            <person name="Walker D."/>
            <person name="Woodward J.R."/>
            <person name="Winckler T."/>
            <person name="Tanaka Y."/>
            <person name="Shaulsky G."/>
            <person name="Schleicher M."/>
            <person name="Weinstock G.M."/>
            <person name="Rosenthal A."/>
            <person name="Cox E.C."/>
            <person name="Chisholm R.L."/>
            <person name="Gibbs R.A."/>
            <person name="Loomis W.F."/>
            <person name="Platzer M."/>
            <person name="Kay R.R."/>
            <person name="Williams J.G."/>
            <person name="Dear P.H."/>
            <person name="Noegel A.A."/>
            <person name="Barrell B.G."/>
            <person name="Kuspa A."/>
        </authorList>
    </citation>
    <scope>NUCLEOTIDE SEQUENCE [LARGE SCALE GENOMIC DNA]</scope>
    <source>
        <strain>AX4</strain>
    </source>
</reference>
<evidence type="ECO:0000255" key="1"/>
<evidence type="ECO:0000256" key="2">
    <source>
        <dbReference type="SAM" id="MobiDB-lite"/>
    </source>
</evidence>
<evidence type="ECO:0000305" key="3"/>
<sequence length="141" mass="16307">MNNNNNNNNNNNNNNNNNNNNNNNNNSYDSNHSSSSYTSENQNREQQFVFIPEEELERQSLLKKKDNLSYSINKDEIIIINNEDENDQNQTKDSTNPIVLRAKKVVDSFFCKIILVFICLVAIYSLVVIKCDGFHFNHCSP</sequence>
<name>Y8232_DICDI</name>
<keyword id="KW-0472">Membrane</keyword>
<keyword id="KW-1185">Reference proteome</keyword>
<keyword id="KW-0812">Transmembrane</keyword>
<keyword id="KW-1133">Transmembrane helix</keyword>
<proteinExistence type="predicted"/>
<feature type="chain" id="PRO_0000352479" description="Putative uncharacterized protein DDB_G0280391">
    <location>
        <begin position="1"/>
        <end position="141"/>
    </location>
</feature>
<feature type="transmembrane region" description="Helical" evidence="1">
    <location>
        <begin position="109"/>
        <end position="129"/>
    </location>
</feature>
<feature type="region of interest" description="Disordered" evidence="2">
    <location>
        <begin position="1"/>
        <end position="48"/>
    </location>
</feature>
<feature type="compositionally biased region" description="Low complexity" evidence="2">
    <location>
        <begin position="1"/>
        <end position="39"/>
    </location>
</feature>
<accession>Q54VI8</accession>